<reference key="1">
    <citation type="journal article" date="1987" name="Biochemistry">
        <title>Ovomucoid third domains from 100 avian species: isolation, sequences, and hypervariability of enzyme-inhibitor contact residues.</title>
        <authorList>
            <person name="Laskowski M. Jr."/>
            <person name="Kato I."/>
            <person name="Ardelt W."/>
            <person name="Cook J."/>
            <person name="Denton A."/>
            <person name="Empie M.W."/>
            <person name="Kohr W.J."/>
            <person name="Park S.J."/>
            <person name="Parks K."/>
            <person name="Schatzley B.L."/>
            <person name="Schoenberger O.L."/>
            <person name="Tashiro M."/>
            <person name="Vichot G."/>
            <person name="Whatley H.E."/>
            <person name="Wieczorek A."/>
            <person name="Wieczorek M."/>
        </authorList>
    </citation>
    <scope>PROTEIN SEQUENCE</scope>
</reference>
<reference key="2">
    <citation type="book" date="1978" name="Regulatory proteolytic enzymes and their inhibitors">
        <title>Evolution of avian ovomucoids.</title>
        <editorList>
            <person name="Magnusson S."/>
            <person name="Ottesen M."/>
            <person name="Foltmann B."/>
            <person name="Dano K."/>
            <person name="Neurath H."/>
        </editorList>
        <authorList>
            <person name="Kato I."/>
            <person name="Kohr W.J."/>
            <person name="Laskowski M. Jr."/>
        </authorList>
    </citation>
    <scope>PROTEIN SEQUENCE</scope>
</reference>
<proteinExistence type="evidence at protein level"/>
<comment type="subcellular location">
    <subcellularLocation>
        <location>Secreted</location>
    </subcellularLocation>
</comment>
<comment type="domain">
    <text>Avian ovomucoid consists of three homologous, tandem Kazal family inhibitory domains.</text>
</comment>
<dbReference type="PIR" id="C31446">
    <property type="entry name" value="C31446"/>
</dbReference>
<dbReference type="BMRB" id="P05591"/>
<dbReference type="SMR" id="P05591"/>
<dbReference type="GO" id="GO:0005576">
    <property type="term" value="C:extracellular region"/>
    <property type="evidence" value="ECO:0007669"/>
    <property type="project" value="UniProtKB-SubCell"/>
</dbReference>
<dbReference type="GO" id="GO:0004867">
    <property type="term" value="F:serine-type endopeptidase inhibitor activity"/>
    <property type="evidence" value="ECO:0007669"/>
    <property type="project" value="UniProtKB-KW"/>
</dbReference>
<dbReference type="CDD" id="cd00104">
    <property type="entry name" value="KAZAL_FS"/>
    <property type="match status" value="1"/>
</dbReference>
<dbReference type="FunFam" id="3.30.60.30:FF:000037">
    <property type="entry name" value="Ovomucoid"/>
    <property type="match status" value="1"/>
</dbReference>
<dbReference type="Gene3D" id="3.30.60.30">
    <property type="match status" value="1"/>
</dbReference>
<dbReference type="InterPro" id="IPR051597">
    <property type="entry name" value="Bifunctional_prot_inhibitor"/>
</dbReference>
<dbReference type="InterPro" id="IPR002350">
    <property type="entry name" value="Kazal_dom"/>
</dbReference>
<dbReference type="InterPro" id="IPR036058">
    <property type="entry name" value="Kazal_dom_sf"/>
</dbReference>
<dbReference type="InterPro" id="IPR001239">
    <property type="entry name" value="Prot_inh_Kazal-m"/>
</dbReference>
<dbReference type="PANTHER" id="PTHR47729:SF1">
    <property type="entry name" value="OVOMUCOID-LIKE-RELATED"/>
    <property type="match status" value="1"/>
</dbReference>
<dbReference type="PANTHER" id="PTHR47729">
    <property type="entry name" value="SERINE PEPTIDASE INHIBITOR, KAZAL TYPE 2, TANDEM DUPLICATE 1-RELATED"/>
    <property type="match status" value="1"/>
</dbReference>
<dbReference type="Pfam" id="PF00050">
    <property type="entry name" value="Kazal_1"/>
    <property type="match status" value="1"/>
</dbReference>
<dbReference type="PRINTS" id="PR00290">
    <property type="entry name" value="KAZALINHBTR"/>
</dbReference>
<dbReference type="SMART" id="SM00280">
    <property type="entry name" value="KAZAL"/>
    <property type="match status" value="1"/>
</dbReference>
<dbReference type="SUPFAM" id="SSF100895">
    <property type="entry name" value="Kazal-type serine protease inhibitors"/>
    <property type="match status" value="1"/>
</dbReference>
<dbReference type="PROSITE" id="PS00282">
    <property type="entry name" value="KAZAL_1"/>
    <property type="match status" value="1"/>
</dbReference>
<dbReference type="PROSITE" id="PS51465">
    <property type="entry name" value="KAZAL_2"/>
    <property type="match status" value="1"/>
</dbReference>
<keyword id="KW-0903">Direct protein sequencing</keyword>
<keyword id="KW-1015">Disulfide bond</keyword>
<keyword id="KW-0325">Glycoprotein</keyword>
<keyword id="KW-0646">Protease inhibitor</keyword>
<keyword id="KW-0677">Repeat</keyword>
<keyword id="KW-0964">Secreted</keyword>
<keyword id="KW-0722">Serine protease inhibitor</keyword>
<sequence length="56" mass="6101">FAAVSVDCSEYPKPACMSEYRPLCGSDNKTYVNKCNFCNAVVESNGTLTLSHFGKC</sequence>
<evidence type="ECO:0000255" key="1">
    <source>
        <dbReference type="PROSITE-ProRule" id="PRU00798"/>
    </source>
</evidence>
<organism>
    <name type="scientific">Colinus virginianus</name>
    <name type="common">Northern bobwhite</name>
    <name type="synonym">Tetrao virginianus</name>
    <dbReference type="NCBI Taxonomy" id="9014"/>
    <lineage>
        <taxon>Eukaryota</taxon>
        <taxon>Metazoa</taxon>
        <taxon>Chordata</taxon>
        <taxon>Craniata</taxon>
        <taxon>Vertebrata</taxon>
        <taxon>Euteleostomi</taxon>
        <taxon>Archelosauria</taxon>
        <taxon>Archosauria</taxon>
        <taxon>Dinosauria</taxon>
        <taxon>Saurischia</taxon>
        <taxon>Theropoda</taxon>
        <taxon>Coelurosauria</taxon>
        <taxon>Aves</taxon>
        <taxon>Neognathae</taxon>
        <taxon>Galloanserae</taxon>
        <taxon>Galliformes</taxon>
        <taxon>Odontophoridae</taxon>
        <taxon>Colinus</taxon>
    </lineage>
</organism>
<protein>
    <recommendedName>
        <fullName>Ovomucoid</fullName>
    </recommendedName>
</protein>
<name>IOVO_COLVI</name>
<feature type="chain" id="PRO_0000073088" description="Ovomucoid">
    <location>
        <begin position="1" status="less than"/>
        <end position="56" status="greater than"/>
    </location>
</feature>
<feature type="domain" description="Kazal-like" evidence="1">
    <location>
        <begin position="6"/>
        <end position="56"/>
    </location>
</feature>
<feature type="site" description="Reactive bond 3">
    <location>
        <begin position="18"/>
        <end position="19"/>
    </location>
</feature>
<feature type="glycosylation site" description="N-linked (GlcNAc...) asparagine">
    <location>
        <position position="45"/>
    </location>
</feature>
<feature type="disulfide bond">
    <location>
        <begin position="8"/>
        <end position="38"/>
    </location>
</feature>
<feature type="disulfide bond">
    <location>
        <begin position="16"/>
        <end position="35"/>
    </location>
</feature>
<feature type="disulfide bond">
    <location>
        <begin position="24"/>
        <end position="56"/>
    </location>
</feature>
<feature type="non-terminal residue">
    <location>
        <position position="1"/>
    </location>
</feature>
<feature type="non-terminal residue">
    <location>
        <position position="56"/>
    </location>
</feature>
<accession>P05591</accession>